<protein>
    <recommendedName>
        <fullName evidence="1">DNA gyrase subunit B</fullName>
        <ecNumber evidence="1">5.6.2.2</ecNumber>
    </recommendedName>
</protein>
<reference key="1">
    <citation type="journal article" date="2003" name="Mol. Microbiol.">
        <title>Genome-based analysis of virulence genes in a non-biofilm-forming Staphylococcus epidermidis strain (ATCC 12228).</title>
        <authorList>
            <person name="Zhang Y.-Q."/>
            <person name="Ren S.-X."/>
            <person name="Li H.-L."/>
            <person name="Wang Y.-X."/>
            <person name="Fu G."/>
            <person name="Yang J."/>
            <person name="Qin Z.-Q."/>
            <person name="Miao Y.-G."/>
            <person name="Wang W.-Y."/>
            <person name="Chen R.-S."/>
            <person name="Shen Y."/>
            <person name="Chen Z."/>
            <person name="Yuan Z.-H."/>
            <person name="Zhao G.-P."/>
            <person name="Qu D."/>
            <person name="Danchin A."/>
            <person name="Wen Y.-M."/>
        </authorList>
    </citation>
    <scope>NUCLEOTIDE SEQUENCE [LARGE SCALE GENOMIC DNA]</scope>
    <source>
        <strain>ATCC 12228 / FDA PCI 1200</strain>
    </source>
</reference>
<keyword id="KW-0067">ATP-binding</keyword>
<keyword id="KW-0963">Cytoplasm</keyword>
<keyword id="KW-0238">DNA-binding</keyword>
<keyword id="KW-0413">Isomerase</keyword>
<keyword id="KW-0460">Magnesium</keyword>
<keyword id="KW-0479">Metal-binding</keyword>
<keyword id="KW-0547">Nucleotide-binding</keyword>
<keyword id="KW-0799">Topoisomerase</keyword>
<organism>
    <name type="scientific">Staphylococcus epidermidis (strain ATCC 12228 / FDA PCI 1200)</name>
    <dbReference type="NCBI Taxonomy" id="176280"/>
    <lineage>
        <taxon>Bacteria</taxon>
        <taxon>Bacillati</taxon>
        <taxon>Bacillota</taxon>
        <taxon>Bacilli</taxon>
        <taxon>Bacillales</taxon>
        <taxon>Staphylococcaceae</taxon>
        <taxon>Staphylococcus</taxon>
    </lineage>
</organism>
<feature type="chain" id="PRO_0000145344" description="DNA gyrase subunit B">
    <location>
        <begin position="1"/>
        <end position="643"/>
    </location>
</feature>
<feature type="domain" description="Toprim" evidence="1">
    <location>
        <begin position="428"/>
        <end position="542"/>
    </location>
</feature>
<feature type="binding site" evidence="1">
    <location>
        <position position="434"/>
    </location>
    <ligand>
        <name>Mg(2+)</name>
        <dbReference type="ChEBI" id="CHEBI:18420"/>
        <label>1</label>
        <note>catalytic</note>
    </ligand>
</feature>
<feature type="binding site" evidence="1">
    <location>
        <position position="507"/>
    </location>
    <ligand>
        <name>Mg(2+)</name>
        <dbReference type="ChEBI" id="CHEBI:18420"/>
        <label>1</label>
        <note>catalytic</note>
    </ligand>
</feature>
<feature type="binding site" evidence="1">
    <location>
        <position position="507"/>
    </location>
    <ligand>
        <name>Mg(2+)</name>
        <dbReference type="ChEBI" id="CHEBI:18420"/>
        <label>2</label>
    </ligand>
</feature>
<feature type="binding site" evidence="1">
    <location>
        <position position="509"/>
    </location>
    <ligand>
        <name>Mg(2+)</name>
        <dbReference type="ChEBI" id="CHEBI:18420"/>
        <label>2</label>
    </ligand>
</feature>
<feature type="site" description="Interaction with DNA" evidence="1">
    <location>
        <position position="459"/>
    </location>
</feature>
<feature type="site" description="Interaction with DNA" evidence="1">
    <location>
        <position position="462"/>
    </location>
</feature>
<dbReference type="EC" id="5.6.2.2" evidence="1"/>
<dbReference type="EMBL" id="AE015929">
    <property type="protein sequence ID" value="AAO03601.1"/>
    <property type="molecule type" value="Genomic_DNA"/>
</dbReference>
<dbReference type="RefSeq" id="NP_763559.1">
    <property type="nucleotide sequence ID" value="NC_004461.1"/>
</dbReference>
<dbReference type="RefSeq" id="WP_001831817.1">
    <property type="nucleotide sequence ID" value="NZ_WBME01000012.1"/>
</dbReference>
<dbReference type="SMR" id="Q8CQK4"/>
<dbReference type="GeneID" id="50017419"/>
<dbReference type="KEGG" id="sep:SE_0004"/>
<dbReference type="PATRIC" id="fig|176280.10.peg.5"/>
<dbReference type="eggNOG" id="COG0187">
    <property type="taxonomic scope" value="Bacteria"/>
</dbReference>
<dbReference type="HOGENOM" id="CLU_006146_1_2_9"/>
<dbReference type="OrthoDB" id="9802808at2"/>
<dbReference type="Proteomes" id="UP000001411">
    <property type="component" value="Chromosome"/>
</dbReference>
<dbReference type="GO" id="GO:0005694">
    <property type="term" value="C:chromosome"/>
    <property type="evidence" value="ECO:0007669"/>
    <property type="project" value="InterPro"/>
</dbReference>
<dbReference type="GO" id="GO:0005737">
    <property type="term" value="C:cytoplasm"/>
    <property type="evidence" value="ECO:0007669"/>
    <property type="project" value="UniProtKB-SubCell"/>
</dbReference>
<dbReference type="GO" id="GO:0005524">
    <property type="term" value="F:ATP binding"/>
    <property type="evidence" value="ECO:0007669"/>
    <property type="project" value="UniProtKB-UniRule"/>
</dbReference>
<dbReference type="GO" id="GO:0003677">
    <property type="term" value="F:DNA binding"/>
    <property type="evidence" value="ECO:0007669"/>
    <property type="project" value="UniProtKB-KW"/>
</dbReference>
<dbReference type="GO" id="GO:0034335">
    <property type="term" value="F:DNA negative supercoiling activity"/>
    <property type="evidence" value="ECO:0007669"/>
    <property type="project" value="UniProtKB-ARBA"/>
</dbReference>
<dbReference type="GO" id="GO:0046872">
    <property type="term" value="F:metal ion binding"/>
    <property type="evidence" value="ECO:0007669"/>
    <property type="project" value="UniProtKB-KW"/>
</dbReference>
<dbReference type="GO" id="GO:0006265">
    <property type="term" value="P:DNA topological change"/>
    <property type="evidence" value="ECO:0007669"/>
    <property type="project" value="UniProtKB-UniRule"/>
</dbReference>
<dbReference type="GO" id="GO:0006261">
    <property type="term" value="P:DNA-templated DNA replication"/>
    <property type="evidence" value="ECO:0007669"/>
    <property type="project" value="UniProtKB-UniRule"/>
</dbReference>
<dbReference type="CDD" id="cd16928">
    <property type="entry name" value="HATPase_GyrB-like"/>
    <property type="match status" value="1"/>
</dbReference>
<dbReference type="CDD" id="cd00822">
    <property type="entry name" value="TopoII_Trans_DNA_gyrase"/>
    <property type="match status" value="1"/>
</dbReference>
<dbReference type="CDD" id="cd03366">
    <property type="entry name" value="TOPRIM_TopoIIA_GyrB"/>
    <property type="match status" value="1"/>
</dbReference>
<dbReference type="FunFam" id="3.30.230.10:FF:000005">
    <property type="entry name" value="DNA gyrase subunit B"/>
    <property type="match status" value="1"/>
</dbReference>
<dbReference type="FunFam" id="3.30.565.10:FF:000002">
    <property type="entry name" value="DNA gyrase subunit B"/>
    <property type="match status" value="1"/>
</dbReference>
<dbReference type="FunFam" id="3.40.50.670:FF:000002">
    <property type="entry name" value="DNA gyrase subunit B"/>
    <property type="match status" value="1"/>
</dbReference>
<dbReference type="Gene3D" id="3.30.230.10">
    <property type="match status" value="1"/>
</dbReference>
<dbReference type="Gene3D" id="3.40.50.670">
    <property type="match status" value="1"/>
</dbReference>
<dbReference type="Gene3D" id="3.30.565.10">
    <property type="entry name" value="Histidine kinase-like ATPase, C-terminal domain"/>
    <property type="match status" value="1"/>
</dbReference>
<dbReference type="HAMAP" id="MF_01898">
    <property type="entry name" value="GyrB"/>
    <property type="match status" value="1"/>
</dbReference>
<dbReference type="InterPro" id="IPR002288">
    <property type="entry name" value="DNA_gyrase_B_C"/>
</dbReference>
<dbReference type="InterPro" id="IPR011557">
    <property type="entry name" value="GyrB"/>
</dbReference>
<dbReference type="InterPro" id="IPR036890">
    <property type="entry name" value="HATPase_C_sf"/>
</dbReference>
<dbReference type="InterPro" id="IPR020568">
    <property type="entry name" value="Ribosomal_Su5_D2-typ_SF"/>
</dbReference>
<dbReference type="InterPro" id="IPR014721">
    <property type="entry name" value="Ribsml_uS5_D2-typ_fold_subgr"/>
</dbReference>
<dbReference type="InterPro" id="IPR001241">
    <property type="entry name" value="Topo_IIA"/>
</dbReference>
<dbReference type="InterPro" id="IPR013760">
    <property type="entry name" value="Topo_IIA-like_dom_sf"/>
</dbReference>
<dbReference type="InterPro" id="IPR000565">
    <property type="entry name" value="Topo_IIA_B"/>
</dbReference>
<dbReference type="InterPro" id="IPR013759">
    <property type="entry name" value="Topo_IIA_B_C"/>
</dbReference>
<dbReference type="InterPro" id="IPR013506">
    <property type="entry name" value="Topo_IIA_bsu_dom2"/>
</dbReference>
<dbReference type="InterPro" id="IPR018522">
    <property type="entry name" value="TopoIIA_CS"/>
</dbReference>
<dbReference type="InterPro" id="IPR006171">
    <property type="entry name" value="TOPRIM_dom"/>
</dbReference>
<dbReference type="InterPro" id="IPR034160">
    <property type="entry name" value="TOPRIM_GyrB"/>
</dbReference>
<dbReference type="NCBIfam" id="TIGR01059">
    <property type="entry name" value="gyrB"/>
    <property type="match status" value="1"/>
</dbReference>
<dbReference type="NCBIfam" id="NF004189">
    <property type="entry name" value="PRK05644.1"/>
    <property type="match status" value="1"/>
</dbReference>
<dbReference type="NCBIfam" id="NF011501">
    <property type="entry name" value="PRK14939.1"/>
    <property type="match status" value="1"/>
</dbReference>
<dbReference type="PANTHER" id="PTHR45866:SF1">
    <property type="entry name" value="DNA GYRASE SUBUNIT B, MITOCHONDRIAL"/>
    <property type="match status" value="1"/>
</dbReference>
<dbReference type="PANTHER" id="PTHR45866">
    <property type="entry name" value="DNA GYRASE/TOPOISOMERASE SUBUNIT B"/>
    <property type="match status" value="1"/>
</dbReference>
<dbReference type="Pfam" id="PF00204">
    <property type="entry name" value="DNA_gyraseB"/>
    <property type="match status" value="1"/>
</dbReference>
<dbReference type="Pfam" id="PF00986">
    <property type="entry name" value="DNA_gyraseB_C"/>
    <property type="match status" value="1"/>
</dbReference>
<dbReference type="Pfam" id="PF02518">
    <property type="entry name" value="HATPase_c"/>
    <property type="match status" value="1"/>
</dbReference>
<dbReference type="Pfam" id="PF01751">
    <property type="entry name" value="Toprim"/>
    <property type="match status" value="1"/>
</dbReference>
<dbReference type="PRINTS" id="PR01159">
    <property type="entry name" value="DNAGYRASEB"/>
</dbReference>
<dbReference type="PRINTS" id="PR00418">
    <property type="entry name" value="TPI2FAMILY"/>
</dbReference>
<dbReference type="SMART" id="SM00387">
    <property type="entry name" value="HATPase_c"/>
    <property type="match status" value="1"/>
</dbReference>
<dbReference type="SMART" id="SM00433">
    <property type="entry name" value="TOP2c"/>
    <property type="match status" value="1"/>
</dbReference>
<dbReference type="SUPFAM" id="SSF55874">
    <property type="entry name" value="ATPase domain of HSP90 chaperone/DNA topoisomerase II/histidine kinase"/>
    <property type="match status" value="1"/>
</dbReference>
<dbReference type="SUPFAM" id="SSF54211">
    <property type="entry name" value="Ribosomal protein S5 domain 2-like"/>
    <property type="match status" value="1"/>
</dbReference>
<dbReference type="SUPFAM" id="SSF56719">
    <property type="entry name" value="Type II DNA topoisomerase"/>
    <property type="match status" value="1"/>
</dbReference>
<dbReference type="PROSITE" id="PS00177">
    <property type="entry name" value="TOPOISOMERASE_II"/>
    <property type="match status" value="1"/>
</dbReference>
<dbReference type="PROSITE" id="PS50880">
    <property type="entry name" value="TOPRIM"/>
    <property type="match status" value="1"/>
</dbReference>
<comment type="function">
    <text evidence="1">A type II topoisomerase that negatively supercoils closed circular double-stranded (ds) DNA in an ATP-dependent manner to modulate DNA topology and maintain chromosomes in an underwound state. Negative supercoiling favors strand separation, and DNA replication, transcription, recombination and repair, all of which involve strand separation. Also able to catalyze the interconversion of other topological isomers of dsDNA rings, including catenanes and knotted rings. Type II topoisomerases break and join 2 DNA strands simultaneously in an ATP-dependent manner.</text>
</comment>
<comment type="catalytic activity">
    <reaction evidence="1">
        <text>ATP-dependent breakage, passage and rejoining of double-stranded DNA.</text>
        <dbReference type="EC" id="5.6.2.2"/>
    </reaction>
</comment>
<comment type="cofactor">
    <cofactor evidence="1">
        <name>Mg(2+)</name>
        <dbReference type="ChEBI" id="CHEBI:18420"/>
    </cofactor>
    <cofactor evidence="1">
        <name>Mn(2+)</name>
        <dbReference type="ChEBI" id="CHEBI:29035"/>
    </cofactor>
    <cofactor evidence="1">
        <name>Ca(2+)</name>
        <dbReference type="ChEBI" id="CHEBI:29108"/>
    </cofactor>
    <text evidence="1">Binds two Mg(2+) per subunit. The magnesium ions form salt bridges with both the protein and the DNA. Can also accept other divalent metal cations, such as Mn(2+) or Ca(2+).</text>
</comment>
<comment type="subunit">
    <text evidence="1">Heterotetramer, composed of two GyrA and two GyrB chains. In the heterotetramer, GyrA contains the active site tyrosine that forms a transient covalent intermediate with DNA, while GyrB binds cofactors and catalyzes ATP hydrolysis.</text>
</comment>
<comment type="subcellular location">
    <subcellularLocation>
        <location evidence="1">Cytoplasm</location>
    </subcellularLocation>
</comment>
<comment type="miscellaneous">
    <text evidence="1">Few gyrases are as efficient as E.coli at forming negative supercoils. Not all organisms have 2 type II topoisomerases; in organisms with a single type II topoisomerase this enzyme also has to decatenate newly replicated chromosomes.</text>
</comment>
<comment type="similarity">
    <text evidence="1">Belongs to the type II topoisomerase GyrB family.</text>
</comment>
<evidence type="ECO:0000255" key="1">
    <source>
        <dbReference type="HAMAP-Rule" id="MF_01898"/>
    </source>
</evidence>
<gene>
    <name evidence="1" type="primary">gyrB</name>
    <name type="ordered locus">SE_0004</name>
</gene>
<sequence>MVNTLSDVNNTDNYGAGQIQVLEGLEAVRKRPGMYIGSTSERGLHHLVWEIVDNSIDEALAGYASHIEVVIEKDNWIKVTDNGRGIPVDIQEKMGRPAVEVILTVLHAGGKFGGGGYKVSGGLHGVGSSVVNALSQDLEVYVHRNGTIYHQAYKQGVPQFDLKEIGDTDKTGTAIRFKADKEIFTETTVYNYETLQKRIRELAFLNKGIQITLKDEREEEVREDSYHYEGGIKSYVDLLNENKEPLHDEPIYIHQSKDDIEVEIALQYNSGYATNLLTYANNIHTYEGGTHEDGFKRALTRVLNSYGTQSKIIKEDKDRLSGEDTREGLTAVVSIKHGDPQFEGQTKTKLGNSEVRQVVDRLFSEHFERFLYENPSVGRIIVEKGIMASRARVAAKKAREVTRRKSALDVSSLPGKLADCSSKNPEESEIFLVEGDSAGGSTKSGRDSRTQAILPLRGKILNVEKARLDRILNNNEIRQMITAFGTGIGGEFDISKARYHKIVIMTDADVDGAHIRTLLLTFFYRFMRPLIEAGYVYIAQPPLYKLTQGKQKYYVFNDRELDKLKQELNPSPKWSIARYKGLGEMNADQLWETTMNPEHRSMLQVRLEDAIDADQTFEMLMGDVVENRRQFIEDNAVYANLDF</sequence>
<accession>Q8CQK4</accession>
<proteinExistence type="inferred from homology"/>
<name>GYRB_STAES</name>